<protein>
    <recommendedName>
        <fullName evidence="1">Argininosuccinate synthase</fullName>
        <ecNumber evidence="1">6.3.4.5</ecNumber>
    </recommendedName>
    <alternativeName>
        <fullName evidence="1">Citrulline--aspartate ligase</fullName>
    </alternativeName>
</protein>
<reference key="1">
    <citation type="journal article" date="2003" name="Nature">
        <title>The genome of a motile marine Synechococcus.</title>
        <authorList>
            <person name="Palenik B."/>
            <person name="Brahamsha B."/>
            <person name="Larimer F.W."/>
            <person name="Land M.L."/>
            <person name="Hauser L."/>
            <person name="Chain P."/>
            <person name="Lamerdin J.E."/>
            <person name="Regala W."/>
            <person name="Allen E.E."/>
            <person name="McCarren J."/>
            <person name="Paulsen I.T."/>
            <person name="Dufresne A."/>
            <person name="Partensky F."/>
            <person name="Webb E.A."/>
            <person name="Waterbury J."/>
        </authorList>
    </citation>
    <scope>NUCLEOTIDE SEQUENCE [LARGE SCALE GENOMIC DNA]</scope>
    <source>
        <strain>WH8102</strain>
    </source>
</reference>
<dbReference type="EC" id="6.3.4.5" evidence="1"/>
<dbReference type="EMBL" id="BX569695">
    <property type="protein sequence ID" value="CAE09028.1"/>
    <property type="molecule type" value="Genomic_DNA"/>
</dbReference>
<dbReference type="RefSeq" id="WP_011129366.1">
    <property type="nucleotide sequence ID" value="NC_005070.1"/>
</dbReference>
<dbReference type="SMR" id="Q7U3B9"/>
<dbReference type="STRING" id="84588.SYNW2513"/>
<dbReference type="KEGG" id="syw:SYNW2513"/>
<dbReference type="eggNOG" id="COG0137">
    <property type="taxonomic scope" value="Bacteria"/>
</dbReference>
<dbReference type="HOGENOM" id="CLU_032784_4_2_3"/>
<dbReference type="UniPathway" id="UPA00068">
    <property type="reaction ID" value="UER00113"/>
</dbReference>
<dbReference type="Proteomes" id="UP000001422">
    <property type="component" value="Chromosome"/>
</dbReference>
<dbReference type="GO" id="GO:0005737">
    <property type="term" value="C:cytoplasm"/>
    <property type="evidence" value="ECO:0007669"/>
    <property type="project" value="UniProtKB-SubCell"/>
</dbReference>
<dbReference type="GO" id="GO:0004055">
    <property type="term" value="F:argininosuccinate synthase activity"/>
    <property type="evidence" value="ECO:0007669"/>
    <property type="project" value="UniProtKB-UniRule"/>
</dbReference>
<dbReference type="GO" id="GO:0005524">
    <property type="term" value="F:ATP binding"/>
    <property type="evidence" value="ECO:0007669"/>
    <property type="project" value="UniProtKB-UniRule"/>
</dbReference>
<dbReference type="GO" id="GO:0000053">
    <property type="term" value="P:argininosuccinate metabolic process"/>
    <property type="evidence" value="ECO:0007669"/>
    <property type="project" value="TreeGrafter"/>
</dbReference>
<dbReference type="GO" id="GO:0006526">
    <property type="term" value="P:L-arginine biosynthetic process"/>
    <property type="evidence" value="ECO:0007669"/>
    <property type="project" value="UniProtKB-UniRule"/>
</dbReference>
<dbReference type="GO" id="GO:0000050">
    <property type="term" value="P:urea cycle"/>
    <property type="evidence" value="ECO:0007669"/>
    <property type="project" value="TreeGrafter"/>
</dbReference>
<dbReference type="CDD" id="cd01999">
    <property type="entry name" value="ASS"/>
    <property type="match status" value="1"/>
</dbReference>
<dbReference type="FunFam" id="3.40.50.620:FF:000019">
    <property type="entry name" value="Argininosuccinate synthase"/>
    <property type="match status" value="1"/>
</dbReference>
<dbReference type="FunFam" id="3.90.1260.10:FF:000007">
    <property type="entry name" value="Argininosuccinate synthase"/>
    <property type="match status" value="1"/>
</dbReference>
<dbReference type="Gene3D" id="3.90.1260.10">
    <property type="entry name" value="Argininosuccinate synthetase, chain A, domain 2"/>
    <property type="match status" value="1"/>
</dbReference>
<dbReference type="Gene3D" id="3.40.50.620">
    <property type="entry name" value="HUPs"/>
    <property type="match status" value="1"/>
</dbReference>
<dbReference type="Gene3D" id="1.20.5.470">
    <property type="entry name" value="Single helix bin"/>
    <property type="match status" value="1"/>
</dbReference>
<dbReference type="HAMAP" id="MF_00005">
    <property type="entry name" value="Arg_succ_synth_type1"/>
    <property type="match status" value="1"/>
</dbReference>
<dbReference type="InterPro" id="IPR048268">
    <property type="entry name" value="Arginosuc_syn_C"/>
</dbReference>
<dbReference type="InterPro" id="IPR048267">
    <property type="entry name" value="Arginosuc_syn_N"/>
</dbReference>
<dbReference type="InterPro" id="IPR001518">
    <property type="entry name" value="Arginosuc_synth"/>
</dbReference>
<dbReference type="InterPro" id="IPR018223">
    <property type="entry name" value="Arginosuc_synth_CS"/>
</dbReference>
<dbReference type="InterPro" id="IPR023434">
    <property type="entry name" value="Arginosuc_synth_type_1_subfam"/>
</dbReference>
<dbReference type="InterPro" id="IPR024074">
    <property type="entry name" value="AS_cat/multimer_dom_body"/>
</dbReference>
<dbReference type="InterPro" id="IPR014729">
    <property type="entry name" value="Rossmann-like_a/b/a_fold"/>
</dbReference>
<dbReference type="NCBIfam" id="TIGR00032">
    <property type="entry name" value="argG"/>
    <property type="match status" value="1"/>
</dbReference>
<dbReference type="NCBIfam" id="NF001770">
    <property type="entry name" value="PRK00509.1"/>
    <property type="match status" value="1"/>
</dbReference>
<dbReference type="PANTHER" id="PTHR11587">
    <property type="entry name" value="ARGININOSUCCINATE SYNTHASE"/>
    <property type="match status" value="1"/>
</dbReference>
<dbReference type="PANTHER" id="PTHR11587:SF2">
    <property type="entry name" value="ARGININOSUCCINATE SYNTHASE"/>
    <property type="match status" value="1"/>
</dbReference>
<dbReference type="Pfam" id="PF20979">
    <property type="entry name" value="Arginosuc_syn_C"/>
    <property type="match status" value="1"/>
</dbReference>
<dbReference type="Pfam" id="PF00764">
    <property type="entry name" value="Arginosuc_synth"/>
    <property type="match status" value="1"/>
</dbReference>
<dbReference type="SUPFAM" id="SSF52402">
    <property type="entry name" value="Adenine nucleotide alpha hydrolases-like"/>
    <property type="match status" value="1"/>
</dbReference>
<dbReference type="SUPFAM" id="SSF69864">
    <property type="entry name" value="Argininosuccinate synthetase, C-terminal domain"/>
    <property type="match status" value="1"/>
</dbReference>
<dbReference type="PROSITE" id="PS00564">
    <property type="entry name" value="ARGININOSUCCIN_SYN_1"/>
    <property type="match status" value="1"/>
</dbReference>
<dbReference type="PROSITE" id="PS00565">
    <property type="entry name" value="ARGININOSUCCIN_SYN_2"/>
    <property type="match status" value="1"/>
</dbReference>
<gene>
    <name evidence="1" type="primary">argG</name>
    <name type="ordered locus">SYNW2513</name>
</gene>
<accession>Q7U3B9</accession>
<sequence length="403" mass="43765">MGRANKVVLAYSGGVDTSVCIPYLKQEWGVEEVITFAADLGQGDELEPIRQKALDAGASQSLVGDLIQPFIEEFAFPAIRANALYEGRYPLSTALARPLIARRLVEVAREVGADAVAHGCTGKGNDQVRFDVAIAALAPDLKVLTPAREWGMSREETIAYGERCGIPAPVSKKSPYSIDLNLLGRSIEAGPLEDPMVAPPEEVFAMTSPMSDTPDAAEEIEIAFEAGNPVAINGQVLDPVAMIREANRLAGSHGIGRLDMIENRVVGIKSREIYETPGLLLLIQAHQELESLTLAADVLRSKRQLEMQWADLVYQGLWFGPLKDALDGFMDRTQQHVNGVVRLRLYKGNATVIGRGSTQSSLYVPAMASYGSEDAFDHRAAEGFIYVWGLPTRLWAASQRTSG</sequence>
<comment type="catalytic activity">
    <reaction evidence="1">
        <text>L-citrulline + L-aspartate + ATP = 2-(N(omega)-L-arginino)succinate + AMP + diphosphate + H(+)</text>
        <dbReference type="Rhea" id="RHEA:10932"/>
        <dbReference type="ChEBI" id="CHEBI:15378"/>
        <dbReference type="ChEBI" id="CHEBI:29991"/>
        <dbReference type="ChEBI" id="CHEBI:30616"/>
        <dbReference type="ChEBI" id="CHEBI:33019"/>
        <dbReference type="ChEBI" id="CHEBI:57472"/>
        <dbReference type="ChEBI" id="CHEBI:57743"/>
        <dbReference type="ChEBI" id="CHEBI:456215"/>
        <dbReference type="EC" id="6.3.4.5"/>
    </reaction>
</comment>
<comment type="pathway">
    <text evidence="1">Amino-acid biosynthesis; L-arginine biosynthesis; L-arginine from L-ornithine and carbamoyl phosphate: step 2/3.</text>
</comment>
<comment type="subunit">
    <text evidence="1">Homotetramer.</text>
</comment>
<comment type="subcellular location">
    <subcellularLocation>
        <location evidence="1">Cytoplasm</location>
    </subcellularLocation>
</comment>
<comment type="similarity">
    <text evidence="1">Belongs to the argininosuccinate synthase family. Type 1 subfamily.</text>
</comment>
<feature type="chain" id="PRO_0000148654" description="Argininosuccinate synthase">
    <location>
        <begin position="1"/>
        <end position="403"/>
    </location>
</feature>
<feature type="binding site" evidence="1">
    <location>
        <begin position="10"/>
        <end position="18"/>
    </location>
    <ligand>
        <name>ATP</name>
        <dbReference type="ChEBI" id="CHEBI:30616"/>
    </ligand>
</feature>
<feature type="binding site" evidence="1">
    <location>
        <position position="38"/>
    </location>
    <ligand>
        <name>ATP</name>
        <dbReference type="ChEBI" id="CHEBI:30616"/>
    </ligand>
</feature>
<feature type="binding site" evidence="1">
    <location>
        <position position="89"/>
    </location>
    <ligand>
        <name>L-citrulline</name>
        <dbReference type="ChEBI" id="CHEBI:57743"/>
    </ligand>
</feature>
<feature type="binding site" evidence="1">
    <location>
        <position position="119"/>
    </location>
    <ligand>
        <name>ATP</name>
        <dbReference type="ChEBI" id="CHEBI:30616"/>
    </ligand>
</feature>
<feature type="binding site" evidence="1">
    <location>
        <position position="121"/>
    </location>
    <ligand>
        <name>L-aspartate</name>
        <dbReference type="ChEBI" id="CHEBI:29991"/>
    </ligand>
</feature>
<feature type="binding site" evidence="1">
    <location>
        <position position="125"/>
    </location>
    <ligand>
        <name>L-aspartate</name>
        <dbReference type="ChEBI" id="CHEBI:29991"/>
    </ligand>
</feature>
<feature type="binding site" evidence="1">
    <location>
        <position position="125"/>
    </location>
    <ligand>
        <name>L-citrulline</name>
        <dbReference type="ChEBI" id="CHEBI:57743"/>
    </ligand>
</feature>
<feature type="binding site" evidence="1">
    <location>
        <position position="126"/>
    </location>
    <ligand>
        <name>L-aspartate</name>
        <dbReference type="ChEBI" id="CHEBI:29991"/>
    </ligand>
</feature>
<feature type="binding site" evidence="1">
    <location>
        <position position="129"/>
    </location>
    <ligand>
        <name>L-citrulline</name>
        <dbReference type="ChEBI" id="CHEBI:57743"/>
    </ligand>
</feature>
<feature type="binding site" evidence="1">
    <location>
        <position position="177"/>
    </location>
    <ligand>
        <name>L-citrulline</name>
        <dbReference type="ChEBI" id="CHEBI:57743"/>
    </ligand>
</feature>
<feature type="binding site" evidence="1">
    <location>
        <position position="186"/>
    </location>
    <ligand>
        <name>L-citrulline</name>
        <dbReference type="ChEBI" id="CHEBI:57743"/>
    </ligand>
</feature>
<feature type="binding site" evidence="1">
    <location>
        <position position="262"/>
    </location>
    <ligand>
        <name>L-citrulline</name>
        <dbReference type="ChEBI" id="CHEBI:57743"/>
    </ligand>
</feature>
<feature type="binding site" evidence="1">
    <location>
        <position position="274"/>
    </location>
    <ligand>
        <name>L-citrulline</name>
        <dbReference type="ChEBI" id="CHEBI:57743"/>
    </ligand>
</feature>
<proteinExistence type="inferred from homology"/>
<organism>
    <name type="scientific">Parasynechococcus marenigrum (strain WH8102)</name>
    <dbReference type="NCBI Taxonomy" id="84588"/>
    <lineage>
        <taxon>Bacteria</taxon>
        <taxon>Bacillati</taxon>
        <taxon>Cyanobacteriota</taxon>
        <taxon>Cyanophyceae</taxon>
        <taxon>Synechococcales</taxon>
        <taxon>Prochlorococcaceae</taxon>
        <taxon>Parasynechococcus</taxon>
        <taxon>Parasynechococcus marenigrum</taxon>
    </lineage>
</organism>
<evidence type="ECO:0000255" key="1">
    <source>
        <dbReference type="HAMAP-Rule" id="MF_00005"/>
    </source>
</evidence>
<name>ASSY_PARMW</name>
<keyword id="KW-0028">Amino-acid biosynthesis</keyword>
<keyword id="KW-0055">Arginine biosynthesis</keyword>
<keyword id="KW-0067">ATP-binding</keyword>
<keyword id="KW-0963">Cytoplasm</keyword>
<keyword id="KW-0436">Ligase</keyword>
<keyword id="KW-0547">Nucleotide-binding</keyword>